<feature type="chain" id="PRO_0000346121" description="Cell division protein ZapA">
    <location>
        <begin position="1"/>
        <end position="106"/>
    </location>
</feature>
<feature type="coiled-coil region" evidence="2">
    <location>
        <begin position="21"/>
        <end position="80"/>
    </location>
</feature>
<gene>
    <name type="primary">zapA</name>
    <name type="ordered locus">HD_1001</name>
</gene>
<comment type="function">
    <text evidence="1">Activator of cell division through the inhibition of FtsZ GTPase activity, therefore promoting FtsZ assembly into bundles of protofilaments necessary for the formation of the division Z ring. It is recruited early at mid-cell but it is not essential for cell division (By similarity).</text>
</comment>
<comment type="subunit">
    <text evidence="1">Homodimer. Interacts with FtsZ (By similarity).</text>
</comment>
<comment type="subcellular location">
    <subcellularLocation>
        <location evidence="1">Cytoplasm</location>
    </subcellularLocation>
    <text evidence="1">Localizes at mid-cell.</text>
</comment>
<comment type="similarity">
    <text evidence="3">Belongs to the ZapA family. Type 1 subfamily.</text>
</comment>
<comment type="sequence caution" evidence="3">
    <conflict type="erroneous initiation">
        <sequence resource="EMBL-CDS" id="AAP95880"/>
    </conflict>
</comment>
<keyword id="KW-0131">Cell cycle</keyword>
<keyword id="KW-0132">Cell division</keyword>
<keyword id="KW-0175">Coiled coil</keyword>
<keyword id="KW-0963">Cytoplasm</keyword>
<keyword id="KW-1185">Reference proteome</keyword>
<keyword id="KW-0717">Septation</keyword>
<evidence type="ECO:0000250" key="1"/>
<evidence type="ECO:0000255" key="2"/>
<evidence type="ECO:0000305" key="3"/>
<accession>Q7VMH6</accession>
<reference key="1">
    <citation type="submission" date="2003-06" db="EMBL/GenBank/DDBJ databases">
        <title>The complete genome sequence of Haemophilus ducreyi.</title>
        <authorList>
            <person name="Munson R.S. Jr."/>
            <person name="Ray W.C."/>
            <person name="Mahairas G."/>
            <person name="Sabo P."/>
            <person name="Mungur R."/>
            <person name="Johnson L."/>
            <person name="Nguyen D."/>
            <person name="Wang J."/>
            <person name="Forst C."/>
            <person name="Hood L."/>
        </authorList>
    </citation>
    <scope>NUCLEOTIDE SEQUENCE [LARGE SCALE GENOMIC DNA]</scope>
    <source>
        <strain>35000HP / ATCC 700724</strain>
    </source>
</reference>
<name>ZAPA_HAEDU</name>
<proteinExistence type="inferred from homology"/>
<dbReference type="EMBL" id="AE017143">
    <property type="protein sequence ID" value="AAP95880.1"/>
    <property type="status" value="ALT_INIT"/>
    <property type="molecule type" value="Genomic_DNA"/>
</dbReference>
<dbReference type="RefSeq" id="WP_041603461.1">
    <property type="nucleotide sequence ID" value="NC_002940.2"/>
</dbReference>
<dbReference type="SMR" id="Q7VMH6"/>
<dbReference type="STRING" id="233412.HD_1001"/>
<dbReference type="KEGG" id="hdu:HD_1001"/>
<dbReference type="eggNOG" id="COG3027">
    <property type="taxonomic scope" value="Bacteria"/>
</dbReference>
<dbReference type="HOGENOM" id="CLU_116623_3_0_6"/>
<dbReference type="OrthoDB" id="5917174at2"/>
<dbReference type="Proteomes" id="UP000001022">
    <property type="component" value="Chromosome"/>
</dbReference>
<dbReference type="GO" id="GO:0032153">
    <property type="term" value="C:cell division site"/>
    <property type="evidence" value="ECO:0007669"/>
    <property type="project" value="TreeGrafter"/>
</dbReference>
<dbReference type="GO" id="GO:0030428">
    <property type="term" value="C:cell septum"/>
    <property type="evidence" value="ECO:0007669"/>
    <property type="project" value="TreeGrafter"/>
</dbReference>
<dbReference type="GO" id="GO:0005829">
    <property type="term" value="C:cytosol"/>
    <property type="evidence" value="ECO:0007669"/>
    <property type="project" value="TreeGrafter"/>
</dbReference>
<dbReference type="GO" id="GO:0000917">
    <property type="term" value="P:division septum assembly"/>
    <property type="evidence" value="ECO:0007669"/>
    <property type="project" value="UniProtKB-KW"/>
</dbReference>
<dbReference type="GO" id="GO:0043093">
    <property type="term" value="P:FtsZ-dependent cytokinesis"/>
    <property type="evidence" value="ECO:0007669"/>
    <property type="project" value="TreeGrafter"/>
</dbReference>
<dbReference type="GO" id="GO:0000921">
    <property type="term" value="P:septin ring assembly"/>
    <property type="evidence" value="ECO:0007669"/>
    <property type="project" value="TreeGrafter"/>
</dbReference>
<dbReference type="Gene3D" id="3.30.160.880">
    <property type="entry name" value="Cell division protein ZapA protomer, N-terminal domain"/>
    <property type="match status" value="1"/>
</dbReference>
<dbReference type="InterPro" id="IPR007838">
    <property type="entry name" value="Cell_div_ZapA-like"/>
</dbReference>
<dbReference type="InterPro" id="IPR036192">
    <property type="entry name" value="Cell_div_ZapA-like_sf"/>
</dbReference>
<dbReference type="InterPro" id="IPR042233">
    <property type="entry name" value="Cell_div_ZapA_N"/>
</dbReference>
<dbReference type="PANTHER" id="PTHR34981">
    <property type="entry name" value="CELL DIVISION PROTEIN ZAPA"/>
    <property type="match status" value="1"/>
</dbReference>
<dbReference type="PANTHER" id="PTHR34981:SF1">
    <property type="entry name" value="CELL DIVISION PROTEIN ZAPA"/>
    <property type="match status" value="1"/>
</dbReference>
<dbReference type="Pfam" id="PF05164">
    <property type="entry name" value="ZapA"/>
    <property type="match status" value="1"/>
</dbReference>
<dbReference type="SUPFAM" id="SSF102829">
    <property type="entry name" value="Cell division protein ZapA-like"/>
    <property type="match status" value="1"/>
</dbReference>
<organism>
    <name type="scientific">Haemophilus ducreyi (strain 35000HP / ATCC 700724)</name>
    <dbReference type="NCBI Taxonomy" id="233412"/>
    <lineage>
        <taxon>Bacteria</taxon>
        <taxon>Pseudomonadati</taxon>
        <taxon>Pseudomonadota</taxon>
        <taxon>Gammaproteobacteria</taxon>
        <taxon>Pasteurellales</taxon>
        <taxon>Pasteurellaceae</taxon>
        <taxon>Haemophilus</taxon>
    </lineage>
</organism>
<protein>
    <recommendedName>
        <fullName>Cell division protein ZapA</fullName>
    </recommendedName>
    <alternativeName>
        <fullName>Z ring-associated protein ZapA</fullName>
    </alternativeName>
</protein>
<sequence length="106" mass="11902">MSANYIEVQIFGQVLRLHCPAEQQENLRASAQRLEERVALLKDQSGIIQLEKVLAIVALNLNYELEQEKQKNADNKTVLESCIHQLDSSLNKLATTGSIAINQENI</sequence>